<comment type="function">
    <text evidence="1">Small GTP-binding protein which cycles between a GDP-bound inactive and a GTP-bound active form. In its active form interacts with and regulates several effectors including MAP4K4, MINK1 and TNIK. Part of a signaling complex composed of NEDD4, RAP2A and TNIK which regulates neuronal dendrite extension and arborization during development. More generally, it is part of several signaling cascades and may regulate cytoskeletal rearrangements, cell migration, cell adhesion and cell spreading (By similarity).</text>
</comment>
<comment type="catalytic activity">
    <reaction evidence="2">
        <text>GTP + H2O = GDP + phosphate + H(+)</text>
        <dbReference type="Rhea" id="RHEA:19669"/>
        <dbReference type="ChEBI" id="CHEBI:15377"/>
        <dbReference type="ChEBI" id="CHEBI:15378"/>
        <dbReference type="ChEBI" id="CHEBI:37565"/>
        <dbReference type="ChEBI" id="CHEBI:43474"/>
        <dbReference type="ChEBI" id="CHEBI:58189"/>
        <dbReference type="EC" id="3.6.5.2"/>
    </reaction>
</comment>
<comment type="activity regulation">
    <text evidence="1">Activated by the guanine nucleotide-exchange factors RAPGEF3 and RAPGEF4 in a cAMP-dependent manner. Nucleotide exchange is also specifically stimulated by RAPGEF5, RASGEF1A and RASGEF1B (By similarity).</text>
</comment>
<comment type="subunit">
    <text evidence="1">Interacts (GTP-bound form) with RUNDC3A. Interacts with PLCE1. Interacts with ARHGAP29, SGSM1, SGSM2 and SGSM3. Interacts (GTP-bound form preferentially) with TNIK (via the CNH domain); the interaction is direct and recruits RAP2A to the E3 ubiquitin ligase NEDD4. Interacts with MINK1. Interacts (GTP-bound form preferentially) with MAP4K4. Interacts with cytoskeletal actin. Interacts with RGS14; the interaction is GTP-dependent (By similarity).</text>
</comment>
<comment type="subcellular location">
    <subcellularLocation>
        <location evidence="2">Midbody</location>
    </subcellularLocation>
    <subcellularLocation>
        <location evidence="2">Cell projection</location>
        <location evidence="2">Lamellipodium membrane</location>
    </subcellularLocation>
    <subcellularLocation>
        <location evidence="2">Golgi apparatus</location>
    </subcellularLocation>
    <subcellularLocation>
        <location evidence="2">Recycling endosome membrane</location>
        <topology evidence="2">Lipid-anchor</topology>
        <orientation evidence="2">Cytoplasmic side</orientation>
    </subcellularLocation>
    <subcellularLocation>
        <location evidence="2">Lysosome</location>
    </subcellularLocation>
    <text evidence="2">Localized to the Golgi. May also localize to the gelatinase-containing granules of neutrophils. Colocalized with RASGEF1B to midbody at telophase. Localized predominantly to the plasma membrane, where it is enriched at lamellipodia ruffles. Cycles between the lamellipodia plasma membrane and endosomes when ubiquitinated by the ECS(RAB40B) complex. Without the ubiquitin signal, sorted to lysosomes for degradation.</text>
</comment>
<comment type="domain">
    <text evidence="1">The effector domain mediates the interaction with RUNDC3A.</text>
</comment>
<comment type="PTM">
    <text evidence="2">Ubiquitinated; undergoes 'Lys-63' monoubiquitination and diubiquitination by NEDD4. Multiple lysine residues are probably modified. Ubiquitination requires TNIK, prevents interaction with effectors and inactivates RAP2A. Ubiquitination by the ECS(RAB40B) complex leads to RAP2A localization to lamellipodia plasma membrane, activation, and regulation of sorting at early endosomes for recycling to the lamellipodia plasma membrane.</text>
</comment>
<comment type="PTM">
    <text evidence="3">Palmitoylated. Palmitoylation is required for association with recycling endosome membranes and activation of TNIK.</text>
</comment>
<comment type="similarity">
    <text evidence="4">Belongs to the small GTPase superfamily. Ras family.</text>
</comment>
<accession>Q5R988</accession>
<organism>
    <name type="scientific">Pongo abelii</name>
    <name type="common">Sumatran orangutan</name>
    <name type="synonym">Pongo pygmaeus abelii</name>
    <dbReference type="NCBI Taxonomy" id="9601"/>
    <lineage>
        <taxon>Eukaryota</taxon>
        <taxon>Metazoa</taxon>
        <taxon>Chordata</taxon>
        <taxon>Craniata</taxon>
        <taxon>Vertebrata</taxon>
        <taxon>Euteleostomi</taxon>
        <taxon>Mammalia</taxon>
        <taxon>Eutheria</taxon>
        <taxon>Euarchontoglires</taxon>
        <taxon>Primates</taxon>
        <taxon>Haplorrhini</taxon>
        <taxon>Catarrhini</taxon>
        <taxon>Hominidae</taxon>
        <taxon>Pongo</taxon>
    </lineage>
</organism>
<keyword id="KW-1003">Cell membrane</keyword>
<keyword id="KW-0966">Cell projection</keyword>
<keyword id="KW-0967">Endosome</keyword>
<keyword id="KW-0333">Golgi apparatus</keyword>
<keyword id="KW-0342">GTP-binding</keyword>
<keyword id="KW-0378">Hydrolase</keyword>
<keyword id="KW-0449">Lipoprotein</keyword>
<keyword id="KW-0458">Lysosome</keyword>
<keyword id="KW-0472">Membrane</keyword>
<keyword id="KW-0488">Methylation</keyword>
<keyword id="KW-0547">Nucleotide-binding</keyword>
<keyword id="KW-0564">Palmitate</keyword>
<keyword id="KW-0636">Prenylation</keyword>
<keyword id="KW-1185">Reference proteome</keyword>
<keyword id="KW-0832">Ubl conjugation</keyword>
<gene>
    <name type="primary">RAP2A</name>
</gene>
<proteinExistence type="evidence at transcript level"/>
<reference key="1">
    <citation type="submission" date="2004-11" db="EMBL/GenBank/DDBJ databases">
        <authorList>
            <consortium name="The German cDNA consortium"/>
        </authorList>
    </citation>
    <scope>NUCLEOTIDE SEQUENCE [LARGE SCALE MRNA] OF 3-183</scope>
    <source>
        <tissue>Brain cortex</tissue>
    </source>
</reference>
<protein>
    <recommendedName>
        <fullName>Ras-related protein Rap-2a</fullName>
        <ecNumber evidence="2">3.6.5.2</ecNumber>
    </recommendedName>
</protein>
<evidence type="ECO:0000250" key="1"/>
<evidence type="ECO:0000250" key="2">
    <source>
        <dbReference type="UniProtKB" id="P10114"/>
    </source>
</evidence>
<evidence type="ECO:0000250" key="3">
    <source>
        <dbReference type="UniProtKB" id="Q80ZJ1"/>
    </source>
</evidence>
<evidence type="ECO:0000305" key="4"/>
<feature type="chain" id="PRO_0000082689" description="Ras-related protein Rap-2a">
    <location>
        <begin position="1"/>
        <end position="180"/>
    </location>
</feature>
<feature type="propeptide" id="PRO_0000281340" description="Removed in mature form" evidence="3">
    <location>
        <begin position="181"/>
        <end position="183"/>
    </location>
</feature>
<feature type="short sequence motif" description="Effector region">
    <location>
        <begin position="32"/>
        <end position="40"/>
    </location>
</feature>
<feature type="binding site" evidence="1">
    <location>
        <begin position="10"/>
        <end position="17"/>
    </location>
    <ligand>
        <name>GTP</name>
        <dbReference type="ChEBI" id="CHEBI:37565"/>
    </ligand>
</feature>
<feature type="binding site" evidence="1">
    <location>
        <begin position="57"/>
        <end position="61"/>
    </location>
    <ligand>
        <name>GTP</name>
        <dbReference type="ChEBI" id="CHEBI:37565"/>
    </ligand>
</feature>
<feature type="binding site" evidence="1">
    <location>
        <begin position="116"/>
        <end position="119"/>
    </location>
    <ligand>
        <name>GTP</name>
        <dbReference type="ChEBI" id="CHEBI:37565"/>
    </ligand>
</feature>
<feature type="modified residue" description="Cysteine methyl ester" evidence="3">
    <location>
        <position position="180"/>
    </location>
</feature>
<feature type="lipid moiety-binding region" description="S-palmitoyl cysteine" evidence="3">
    <location>
        <position position="176"/>
    </location>
</feature>
<feature type="lipid moiety-binding region" description="S-palmitoyl cysteine" evidence="3">
    <location>
        <position position="177"/>
    </location>
</feature>
<feature type="lipid moiety-binding region" description="S-farnesyl cysteine" evidence="3">
    <location>
        <position position="180"/>
    </location>
</feature>
<sequence length="183" mass="20642">MREYKVVVLGSGGVGKSALTVQFVTGTFIEKYDPTIEDFYRKEIEVDSSPSVLEILDTAGTEQFASMRDLYIKNGQGFILVYSLVNQQSFQDIKPMRDQIIRVKRYEKVPVILVGNKVDLESEREVSSNEGRALAEEWGCPFMETSAKSKTMVDELFAEIVRQMNYAAQPDKDDPCCSACNIQ</sequence>
<dbReference type="EC" id="3.6.5.2" evidence="2"/>
<dbReference type="EMBL" id="CR859503">
    <property type="protein sequence ID" value="CAH91672.1"/>
    <property type="molecule type" value="mRNA"/>
</dbReference>
<dbReference type="RefSeq" id="XP_009247013.2">
    <property type="nucleotide sequence ID" value="XM_009248738.3"/>
</dbReference>
<dbReference type="SMR" id="Q5R988"/>
<dbReference type="FunCoup" id="Q5R988">
    <property type="interactions" value="1108"/>
</dbReference>
<dbReference type="STRING" id="9601.ENSPPYP00000006222"/>
<dbReference type="Ensembl" id="ENSPPYT00000040236.1">
    <property type="protein sequence ID" value="ENSPPYP00000031621.1"/>
    <property type="gene ID" value="ENSPPYG00000031802.1"/>
</dbReference>
<dbReference type="GeneID" id="100172918"/>
<dbReference type="eggNOG" id="KOG0395">
    <property type="taxonomic scope" value="Eukaryota"/>
</dbReference>
<dbReference type="GeneTree" id="ENSGT00940000160594"/>
<dbReference type="HOGENOM" id="CLU_041217_9_8_1"/>
<dbReference type="InParanoid" id="Q5R988"/>
<dbReference type="OMA" id="MWGCPFV"/>
<dbReference type="OrthoDB" id="5976022at2759"/>
<dbReference type="Proteomes" id="UP000001595">
    <property type="component" value="Chromosome 13"/>
</dbReference>
<dbReference type="GO" id="GO:0005829">
    <property type="term" value="C:cytosol"/>
    <property type="evidence" value="ECO:0007669"/>
    <property type="project" value="Ensembl"/>
</dbReference>
<dbReference type="GO" id="GO:0030496">
    <property type="term" value="C:midbody"/>
    <property type="evidence" value="ECO:0007669"/>
    <property type="project" value="UniProtKB-SubCell"/>
</dbReference>
<dbReference type="GO" id="GO:0005886">
    <property type="term" value="C:plasma membrane"/>
    <property type="evidence" value="ECO:0007669"/>
    <property type="project" value="Ensembl"/>
</dbReference>
<dbReference type="GO" id="GO:0055038">
    <property type="term" value="C:recycling endosome membrane"/>
    <property type="evidence" value="ECO:0000250"/>
    <property type="project" value="UniProtKB"/>
</dbReference>
<dbReference type="GO" id="GO:0098685">
    <property type="term" value="C:Schaffer collateral - CA1 synapse"/>
    <property type="evidence" value="ECO:0007669"/>
    <property type="project" value="Ensembl"/>
</dbReference>
<dbReference type="GO" id="GO:0003925">
    <property type="term" value="F:G protein activity"/>
    <property type="evidence" value="ECO:0007669"/>
    <property type="project" value="UniProtKB-EC"/>
</dbReference>
<dbReference type="GO" id="GO:0019003">
    <property type="term" value="F:GDP binding"/>
    <property type="evidence" value="ECO:0007669"/>
    <property type="project" value="Ensembl"/>
</dbReference>
<dbReference type="GO" id="GO:0005525">
    <property type="term" value="F:GTP binding"/>
    <property type="evidence" value="ECO:0007669"/>
    <property type="project" value="UniProtKB-KW"/>
</dbReference>
<dbReference type="GO" id="GO:0003924">
    <property type="term" value="F:GTPase activity"/>
    <property type="evidence" value="ECO:0000250"/>
    <property type="project" value="UniProtKB"/>
</dbReference>
<dbReference type="GO" id="GO:0000287">
    <property type="term" value="F:magnesium ion binding"/>
    <property type="evidence" value="ECO:0007669"/>
    <property type="project" value="Ensembl"/>
</dbReference>
<dbReference type="GO" id="GO:0030036">
    <property type="term" value="P:actin cytoskeleton organization"/>
    <property type="evidence" value="ECO:0000250"/>
    <property type="project" value="UniProtKB"/>
</dbReference>
<dbReference type="GO" id="GO:0071466">
    <property type="term" value="P:cellular response to xenobiotic stimulus"/>
    <property type="evidence" value="ECO:0007669"/>
    <property type="project" value="Ensembl"/>
</dbReference>
<dbReference type="GO" id="GO:0045184">
    <property type="term" value="P:establishment of protein localization"/>
    <property type="evidence" value="ECO:0007669"/>
    <property type="project" value="Ensembl"/>
</dbReference>
<dbReference type="GO" id="GO:0030033">
    <property type="term" value="P:microvillus assembly"/>
    <property type="evidence" value="ECO:0007669"/>
    <property type="project" value="Ensembl"/>
</dbReference>
<dbReference type="GO" id="GO:0030336">
    <property type="term" value="P:negative regulation of cell migration"/>
    <property type="evidence" value="ECO:0007669"/>
    <property type="project" value="Ensembl"/>
</dbReference>
<dbReference type="GO" id="GO:0031954">
    <property type="term" value="P:positive regulation of protein autophosphorylation"/>
    <property type="evidence" value="ECO:0000250"/>
    <property type="project" value="UniProtKB"/>
</dbReference>
<dbReference type="GO" id="GO:0008104">
    <property type="term" value="P:protein localization"/>
    <property type="evidence" value="ECO:0000250"/>
    <property type="project" value="UniProtKB"/>
</dbReference>
<dbReference type="GO" id="GO:0072659">
    <property type="term" value="P:protein localization to plasma membrane"/>
    <property type="evidence" value="ECO:0007669"/>
    <property type="project" value="Ensembl"/>
</dbReference>
<dbReference type="GO" id="GO:0032486">
    <property type="term" value="P:Rap protein signal transduction"/>
    <property type="evidence" value="ECO:0000250"/>
    <property type="project" value="UniProtKB"/>
</dbReference>
<dbReference type="GO" id="GO:0048814">
    <property type="term" value="P:regulation of dendrite morphogenesis"/>
    <property type="evidence" value="ECO:0000250"/>
    <property type="project" value="UniProtKB"/>
</dbReference>
<dbReference type="GO" id="GO:0046328">
    <property type="term" value="P:regulation of JNK cascade"/>
    <property type="evidence" value="ECO:0000250"/>
    <property type="project" value="UniProtKB"/>
</dbReference>
<dbReference type="GO" id="GO:0099072">
    <property type="term" value="P:regulation of postsynaptic membrane neurotransmitter receptor levels"/>
    <property type="evidence" value="ECO:0007669"/>
    <property type="project" value="Ensembl"/>
</dbReference>
<dbReference type="GO" id="GO:0051963">
    <property type="term" value="P:regulation of synapse assembly"/>
    <property type="evidence" value="ECO:0007669"/>
    <property type="project" value="Ensembl"/>
</dbReference>
<dbReference type="CDD" id="cd04176">
    <property type="entry name" value="Rap2"/>
    <property type="match status" value="1"/>
</dbReference>
<dbReference type="FunFam" id="3.40.50.300:FF:000189">
    <property type="entry name" value="Member of ras oncogene family"/>
    <property type="match status" value="1"/>
</dbReference>
<dbReference type="Gene3D" id="3.40.50.300">
    <property type="entry name" value="P-loop containing nucleotide triphosphate hydrolases"/>
    <property type="match status" value="1"/>
</dbReference>
<dbReference type="InterPro" id="IPR027417">
    <property type="entry name" value="P-loop_NTPase"/>
</dbReference>
<dbReference type="InterPro" id="IPR041840">
    <property type="entry name" value="Rap2"/>
</dbReference>
<dbReference type="InterPro" id="IPR005225">
    <property type="entry name" value="Small_GTP-bd"/>
</dbReference>
<dbReference type="InterPro" id="IPR001806">
    <property type="entry name" value="Small_GTPase"/>
</dbReference>
<dbReference type="InterPro" id="IPR020849">
    <property type="entry name" value="Small_GTPase_Ras-type"/>
</dbReference>
<dbReference type="NCBIfam" id="TIGR00231">
    <property type="entry name" value="small_GTP"/>
    <property type="match status" value="1"/>
</dbReference>
<dbReference type="PANTHER" id="PTHR24070">
    <property type="entry name" value="RAS, DI-RAS, AND RHEB FAMILY MEMBERS OF SMALL GTPASE SUPERFAMILY"/>
    <property type="match status" value="1"/>
</dbReference>
<dbReference type="Pfam" id="PF00071">
    <property type="entry name" value="Ras"/>
    <property type="match status" value="1"/>
</dbReference>
<dbReference type="PRINTS" id="PR00449">
    <property type="entry name" value="RASTRNSFRMNG"/>
</dbReference>
<dbReference type="SMART" id="SM00175">
    <property type="entry name" value="RAB"/>
    <property type="match status" value="1"/>
</dbReference>
<dbReference type="SMART" id="SM00176">
    <property type="entry name" value="RAN"/>
    <property type="match status" value="1"/>
</dbReference>
<dbReference type="SMART" id="SM00173">
    <property type="entry name" value="RAS"/>
    <property type="match status" value="1"/>
</dbReference>
<dbReference type="SMART" id="SM00174">
    <property type="entry name" value="RHO"/>
    <property type="match status" value="1"/>
</dbReference>
<dbReference type="SUPFAM" id="SSF52540">
    <property type="entry name" value="P-loop containing nucleoside triphosphate hydrolases"/>
    <property type="match status" value="1"/>
</dbReference>
<dbReference type="PROSITE" id="PS51421">
    <property type="entry name" value="RAS"/>
    <property type="match status" value="1"/>
</dbReference>
<name>RAP2A_PONAB</name>